<protein>
    <recommendedName>
        <fullName evidence="1">Holliday junction branch migration complex subunit RuvA</fullName>
    </recommendedName>
</protein>
<name>RUVA_NEIG1</name>
<feature type="chain" id="PRO_0000224884" description="Holliday junction branch migration complex subunit RuvA">
    <location>
        <begin position="1"/>
        <end position="194"/>
    </location>
</feature>
<feature type="region of interest" description="Domain I" evidence="1">
    <location>
        <begin position="1"/>
        <end position="64"/>
    </location>
</feature>
<feature type="region of interest" description="Domain II" evidence="1">
    <location>
        <begin position="65"/>
        <end position="143"/>
    </location>
</feature>
<feature type="region of interest" description="Flexible linker" evidence="1">
    <location>
        <begin position="144"/>
        <end position="147"/>
    </location>
</feature>
<feature type="region of interest" description="Domain III" evidence="1">
    <location>
        <begin position="147"/>
        <end position="194"/>
    </location>
</feature>
<comment type="function">
    <text evidence="1">The RuvA-RuvB-RuvC complex processes Holliday junction (HJ) DNA during genetic recombination and DNA repair, while the RuvA-RuvB complex plays an important role in the rescue of blocked DNA replication forks via replication fork reversal (RFR). RuvA specifically binds to HJ cruciform DNA, conferring on it an open structure. The RuvB hexamer acts as an ATP-dependent pump, pulling dsDNA into and through the RuvAB complex. HJ branch migration allows RuvC to scan DNA until it finds its consensus sequence, where it cleaves and resolves the cruciform DNA.</text>
</comment>
<comment type="subunit">
    <text evidence="1">Homotetramer. Forms an RuvA(8)-RuvB(12)-Holliday junction (HJ) complex. HJ DNA is sandwiched between 2 RuvA tetramers; dsDNA enters through RuvA and exits via RuvB. An RuvB hexamer assembles on each DNA strand where it exits the tetramer. Each RuvB hexamer is contacted by two RuvA subunits (via domain III) on 2 adjacent RuvB subunits; this complex drives branch migration. In the full resolvosome a probable DNA-RuvA(4)-RuvB(12)-RuvC(2) complex forms which resolves the HJ.</text>
</comment>
<comment type="subcellular location">
    <subcellularLocation>
        <location evidence="1">Cytoplasm</location>
    </subcellularLocation>
</comment>
<comment type="domain">
    <text evidence="1">Has three domains with a flexible linker between the domains II and III and assumes an 'L' shape. Domain III is highly mobile and contacts RuvB.</text>
</comment>
<comment type="similarity">
    <text evidence="1">Belongs to the RuvA family.</text>
</comment>
<organism>
    <name type="scientific">Neisseria gonorrhoeae (strain ATCC 700825 / FA 1090)</name>
    <dbReference type="NCBI Taxonomy" id="242231"/>
    <lineage>
        <taxon>Bacteria</taxon>
        <taxon>Pseudomonadati</taxon>
        <taxon>Pseudomonadota</taxon>
        <taxon>Betaproteobacteria</taxon>
        <taxon>Neisseriales</taxon>
        <taxon>Neisseriaceae</taxon>
        <taxon>Neisseria</taxon>
    </lineage>
</organism>
<keyword id="KW-0963">Cytoplasm</keyword>
<keyword id="KW-0227">DNA damage</keyword>
<keyword id="KW-0233">DNA recombination</keyword>
<keyword id="KW-0234">DNA repair</keyword>
<keyword id="KW-0238">DNA-binding</keyword>
<keyword id="KW-1185">Reference proteome</keyword>
<gene>
    <name evidence="1" type="primary">ruvA</name>
    <name type="ordered locus">NGO_1730</name>
</gene>
<dbReference type="EMBL" id="AE004969">
    <property type="protein sequence ID" value="AAW90351.1"/>
    <property type="molecule type" value="Genomic_DNA"/>
</dbReference>
<dbReference type="RefSeq" id="WP_003689924.1">
    <property type="nucleotide sequence ID" value="NC_002946.2"/>
</dbReference>
<dbReference type="RefSeq" id="YP_208763.1">
    <property type="nucleotide sequence ID" value="NC_002946.2"/>
</dbReference>
<dbReference type="SMR" id="Q5F636"/>
<dbReference type="STRING" id="242231.NGO_1730"/>
<dbReference type="GeneID" id="66754017"/>
<dbReference type="KEGG" id="ngo:NGO_1730"/>
<dbReference type="PATRIC" id="fig|242231.10.peg.2069"/>
<dbReference type="HOGENOM" id="CLU_087936_0_0_4"/>
<dbReference type="Proteomes" id="UP000000535">
    <property type="component" value="Chromosome"/>
</dbReference>
<dbReference type="GO" id="GO:0005737">
    <property type="term" value="C:cytoplasm"/>
    <property type="evidence" value="ECO:0007669"/>
    <property type="project" value="UniProtKB-SubCell"/>
</dbReference>
<dbReference type="GO" id="GO:0009379">
    <property type="term" value="C:Holliday junction helicase complex"/>
    <property type="evidence" value="ECO:0007669"/>
    <property type="project" value="InterPro"/>
</dbReference>
<dbReference type="GO" id="GO:0048476">
    <property type="term" value="C:Holliday junction resolvase complex"/>
    <property type="evidence" value="ECO:0007669"/>
    <property type="project" value="UniProtKB-UniRule"/>
</dbReference>
<dbReference type="GO" id="GO:0005524">
    <property type="term" value="F:ATP binding"/>
    <property type="evidence" value="ECO:0007669"/>
    <property type="project" value="InterPro"/>
</dbReference>
<dbReference type="GO" id="GO:0000400">
    <property type="term" value="F:four-way junction DNA binding"/>
    <property type="evidence" value="ECO:0007669"/>
    <property type="project" value="UniProtKB-UniRule"/>
</dbReference>
<dbReference type="GO" id="GO:0009378">
    <property type="term" value="F:four-way junction helicase activity"/>
    <property type="evidence" value="ECO:0007669"/>
    <property type="project" value="InterPro"/>
</dbReference>
<dbReference type="GO" id="GO:0006310">
    <property type="term" value="P:DNA recombination"/>
    <property type="evidence" value="ECO:0007669"/>
    <property type="project" value="UniProtKB-UniRule"/>
</dbReference>
<dbReference type="GO" id="GO:0006281">
    <property type="term" value="P:DNA repair"/>
    <property type="evidence" value="ECO:0007669"/>
    <property type="project" value="UniProtKB-UniRule"/>
</dbReference>
<dbReference type="CDD" id="cd14332">
    <property type="entry name" value="UBA_RuvA_C"/>
    <property type="match status" value="1"/>
</dbReference>
<dbReference type="Gene3D" id="1.10.150.20">
    <property type="entry name" value="5' to 3' exonuclease, C-terminal subdomain"/>
    <property type="match status" value="1"/>
</dbReference>
<dbReference type="Gene3D" id="1.10.8.10">
    <property type="entry name" value="DNA helicase RuvA subunit, C-terminal domain"/>
    <property type="match status" value="1"/>
</dbReference>
<dbReference type="Gene3D" id="2.40.50.140">
    <property type="entry name" value="Nucleic acid-binding proteins"/>
    <property type="match status" value="1"/>
</dbReference>
<dbReference type="HAMAP" id="MF_00031">
    <property type="entry name" value="DNA_HJ_migration_RuvA"/>
    <property type="match status" value="1"/>
</dbReference>
<dbReference type="InterPro" id="IPR013849">
    <property type="entry name" value="DNA_helicase_Holl-junc_RuvA_I"/>
</dbReference>
<dbReference type="InterPro" id="IPR003583">
    <property type="entry name" value="Hlx-hairpin-Hlx_DNA-bd_motif"/>
</dbReference>
<dbReference type="InterPro" id="IPR012340">
    <property type="entry name" value="NA-bd_OB-fold"/>
</dbReference>
<dbReference type="InterPro" id="IPR000085">
    <property type="entry name" value="RuvA"/>
</dbReference>
<dbReference type="InterPro" id="IPR010994">
    <property type="entry name" value="RuvA_2-like"/>
</dbReference>
<dbReference type="InterPro" id="IPR011114">
    <property type="entry name" value="RuvA_C"/>
</dbReference>
<dbReference type="InterPro" id="IPR036267">
    <property type="entry name" value="RuvA_C_sf"/>
</dbReference>
<dbReference type="NCBIfam" id="TIGR00084">
    <property type="entry name" value="ruvA"/>
    <property type="match status" value="1"/>
</dbReference>
<dbReference type="Pfam" id="PF14520">
    <property type="entry name" value="HHH_5"/>
    <property type="match status" value="1"/>
</dbReference>
<dbReference type="Pfam" id="PF07499">
    <property type="entry name" value="RuvA_C"/>
    <property type="match status" value="1"/>
</dbReference>
<dbReference type="Pfam" id="PF01330">
    <property type="entry name" value="RuvA_N"/>
    <property type="match status" value="1"/>
</dbReference>
<dbReference type="SMART" id="SM00278">
    <property type="entry name" value="HhH1"/>
    <property type="match status" value="2"/>
</dbReference>
<dbReference type="SUPFAM" id="SSF46929">
    <property type="entry name" value="DNA helicase RuvA subunit, C-terminal domain"/>
    <property type="match status" value="1"/>
</dbReference>
<dbReference type="SUPFAM" id="SSF50249">
    <property type="entry name" value="Nucleic acid-binding proteins"/>
    <property type="match status" value="1"/>
</dbReference>
<dbReference type="SUPFAM" id="SSF47781">
    <property type="entry name" value="RuvA domain 2-like"/>
    <property type="match status" value="1"/>
</dbReference>
<evidence type="ECO:0000255" key="1">
    <source>
        <dbReference type="HAMAP-Rule" id="MF_00031"/>
    </source>
</evidence>
<sequence>MISRLTGKLVEKNPPQIVIDVNGVGYEADVSMQTFYNLPPVGESVQLFTQLIIREDAHLLFGFATAEERKTFRQLIKVGGIGAKTALGILSAMTADELARAVAEEDVKRLSSAPGIGKKTAERMVLELRGKLVAHTVTDGLFAASPAADETEDIVSTLLALGYNEREAKAAVKGVPKGTDVGEGVRLALKNLLK</sequence>
<proteinExistence type="inferred from homology"/>
<reference key="1">
    <citation type="submission" date="2003-03" db="EMBL/GenBank/DDBJ databases">
        <title>The complete genome sequence of Neisseria gonorrhoeae.</title>
        <authorList>
            <person name="Lewis L.A."/>
            <person name="Gillaspy A.F."/>
            <person name="McLaughlin R.E."/>
            <person name="Gipson M."/>
            <person name="Ducey T.F."/>
            <person name="Ownbey T."/>
            <person name="Hartman K."/>
            <person name="Nydick C."/>
            <person name="Carson M.B."/>
            <person name="Vaughn J."/>
            <person name="Thomson C."/>
            <person name="Song L."/>
            <person name="Lin S."/>
            <person name="Yuan X."/>
            <person name="Najar F."/>
            <person name="Zhan M."/>
            <person name="Ren Q."/>
            <person name="Zhu H."/>
            <person name="Qi S."/>
            <person name="Kenton S.M."/>
            <person name="Lai H."/>
            <person name="White J.D."/>
            <person name="Clifton S."/>
            <person name="Roe B.A."/>
            <person name="Dyer D.W."/>
        </authorList>
    </citation>
    <scope>NUCLEOTIDE SEQUENCE [LARGE SCALE GENOMIC DNA]</scope>
    <source>
        <strain>ATCC 700825 / FA 1090</strain>
    </source>
</reference>
<accession>Q5F636</accession>